<comment type="function">
    <text evidence="1">Catalyzes the isomerization between 2-isopropylmalate and 3-isopropylmalate, via the formation of 2-isopropylmaleate.</text>
</comment>
<comment type="catalytic activity">
    <reaction evidence="1">
        <text>(2R,3S)-3-isopropylmalate = (2S)-2-isopropylmalate</text>
        <dbReference type="Rhea" id="RHEA:32287"/>
        <dbReference type="ChEBI" id="CHEBI:1178"/>
        <dbReference type="ChEBI" id="CHEBI:35121"/>
        <dbReference type="EC" id="4.2.1.33"/>
    </reaction>
</comment>
<comment type="pathway">
    <text evidence="1">Amino-acid biosynthesis; L-leucine biosynthesis; L-leucine from 3-methyl-2-oxobutanoate: step 2/4.</text>
</comment>
<comment type="subunit">
    <text evidence="1">Heterodimer of LeuC and LeuD.</text>
</comment>
<comment type="similarity">
    <text evidence="1">Belongs to the LeuD family. LeuD type 1 subfamily.</text>
</comment>
<protein>
    <recommendedName>
        <fullName evidence="1">3-isopropylmalate dehydratase small subunit</fullName>
        <ecNumber evidence="1">4.2.1.33</ecNumber>
    </recommendedName>
    <alternativeName>
        <fullName evidence="1">Alpha-IPM isomerase</fullName>
        <shortName evidence="1">IPMI</shortName>
    </alternativeName>
    <alternativeName>
        <fullName evidence="1">Isopropylmalate isomerase</fullName>
    </alternativeName>
</protein>
<keyword id="KW-0028">Amino-acid biosynthesis</keyword>
<keyword id="KW-0100">Branched-chain amino acid biosynthesis</keyword>
<keyword id="KW-0432">Leucine biosynthesis</keyword>
<keyword id="KW-0456">Lyase</keyword>
<proteinExistence type="inferred from homology"/>
<reference key="1">
    <citation type="journal article" date="2009" name="Genome Res.">
        <title>Newly introduced genomic prophage islands are critical determinants of in vivo competitiveness in the Liverpool epidemic strain of Pseudomonas aeruginosa.</title>
        <authorList>
            <person name="Winstanley C."/>
            <person name="Langille M.G.I."/>
            <person name="Fothergill J.L."/>
            <person name="Kukavica-Ibrulj I."/>
            <person name="Paradis-Bleau C."/>
            <person name="Sanschagrin F."/>
            <person name="Thomson N.R."/>
            <person name="Winsor G.L."/>
            <person name="Quail M.A."/>
            <person name="Lennard N."/>
            <person name="Bignell A."/>
            <person name="Clarke L."/>
            <person name="Seeger K."/>
            <person name="Saunders D."/>
            <person name="Harris D."/>
            <person name="Parkhill J."/>
            <person name="Hancock R.E.W."/>
            <person name="Brinkman F.S.L."/>
            <person name="Levesque R.C."/>
        </authorList>
    </citation>
    <scope>NUCLEOTIDE SEQUENCE [LARGE SCALE GENOMIC DNA]</scope>
    <source>
        <strain>LESB58</strain>
    </source>
</reference>
<gene>
    <name evidence="1" type="primary">leuD</name>
    <name type="ordered locus">PLES_19391</name>
</gene>
<accession>B7VBQ0</accession>
<name>LEUD_PSEA8</name>
<dbReference type="EC" id="4.2.1.33" evidence="1"/>
<dbReference type="EMBL" id="FM209186">
    <property type="protein sequence ID" value="CAW26667.1"/>
    <property type="molecule type" value="Genomic_DNA"/>
</dbReference>
<dbReference type="RefSeq" id="WP_003091398.1">
    <property type="nucleotide sequence ID" value="NC_011770.1"/>
</dbReference>
<dbReference type="SMR" id="B7VBQ0"/>
<dbReference type="KEGG" id="pag:PLES_19391"/>
<dbReference type="HOGENOM" id="CLU_081378_0_3_6"/>
<dbReference type="UniPathway" id="UPA00048">
    <property type="reaction ID" value="UER00071"/>
</dbReference>
<dbReference type="GO" id="GO:0009316">
    <property type="term" value="C:3-isopropylmalate dehydratase complex"/>
    <property type="evidence" value="ECO:0007669"/>
    <property type="project" value="InterPro"/>
</dbReference>
<dbReference type="GO" id="GO:0003861">
    <property type="term" value="F:3-isopropylmalate dehydratase activity"/>
    <property type="evidence" value="ECO:0007669"/>
    <property type="project" value="UniProtKB-UniRule"/>
</dbReference>
<dbReference type="GO" id="GO:0009098">
    <property type="term" value="P:L-leucine biosynthetic process"/>
    <property type="evidence" value="ECO:0007669"/>
    <property type="project" value="UniProtKB-UniRule"/>
</dbReference>
<dbReference type="CDD" id="cd01577">
    <property type="entry name" value="IPMI_Swivel"/>
    <property type="match status" value="1"/>
</dbReference>
<dbReference type="FunFam" id="3.20.19.10:FF:000003">
    <property type="entry name" value="3-isopropylmalate dehydratase small subunit"/>
    <property type="match status" value="1"/>
</dbReference>
<dbReference type="Gene3D" id="3.20.19.10">
    <property type="entry name" value="Aconitase, domain 4"/>
    <property type="match status" value="1"/>
</dbReference>
<dbReference type="HAMAP" id="MF_01031">
    <property type="entry name" value="LeuD_type1"/>
    <property type="match status" value="1"/>
</dbReference>
<dbReference type="InterPro" id="IPR004431">
    <property type="entry name" value="3-IsopropMal_deHydase_ssu"/>
</dbReference>
<dbReference type="InterPro" id="IPR015928">
    <property type="entry name" value="Aconitase/3IPM_dehydase_swvl"/>
</dbReference>
<dbReference type="InterPro" id="IPR000573">
    <property type="entry name" value="AconitaseA/IPMdHydase_ssu_swvl"/>
</dbReference>
<dbReference type="InterPro" id="IPR033940">
    <property type="entry name" value="IPMI_Swivel"/>
</dbReference>
<dbReference type="InterPro" id="IPR050075">
    <property type="entry name" value="LeuD"/>
</dbReference>
<dbReference type="NCBIfam" id="TIGR00171">
    <property type="entry name" value="leuD"/>
    <property type="match status" value="1"/>
</dbReference>
<dbReference type="NCBIfam" id="NF002458">
    <property type="entry name" value="PRK01641.1"/>
    <property type="match status" value="1"/>
</dbReference>
<dbReference type="PANTHER" id="PTHR43345:SF5">
    <property type="entry name" value="3-ISOPROPYLMALATE DEHYDRATASE SMALL SUBUNIT"/>
    <property type="match status" value="1"/>
</dbReference>
<dbReference type="PANTHER" id="PTHR43345">
    <property type="entry name" value="3-ISOPROPYLMALATE DEHYDRATASE SMALL SUBUNIT 2-RELATED-RELATED"/>
    <property type="match status" value="1"/>
</dbReference>
<dbReference type="Pfam" id="PF00694">
    <property type="entry name" value="Aconitase_C"/>
    <property type="match status" value="1"/>
</dbReference>
<dbReference type="SUPFAM" id="SSF52016">
    <property type="entry name" value="LeuD/IlvD-like"/>
    <property type="match status" value="1"/>
</dbReference>
<sequence length="212" mass="24011">MKPYTQTTGLVAPLDRANVDTDQIIPKQFLKSIKRTGFGPNLFDEWRYLDVGQPGQDNSKRPLNPDFVLNQPRYQGASVLLARENFGCGSSREHAPWALDEYGFRTVIAPSYADIFFNNSFKNGLLPIILPEAEVDELFRQVEANEGYQLSIDLAAQTVTRPDGKVLGFEVDPFRKHCLLNGLDDIGLTLQDADAIRAFEDGYRQQQPWLFR</sequence>
<organism>
    <name type="scientific">Pseudomonas aeruginosa (strain LESB58)</name>
    <dbReference type="NCBI Taxonomy" id="557722"/>
    <lineage>
        <taxon>Bacteria</taxon>
        <taxon>Pseudomonadati</taxon>
        <taxon>Pseudomonadota</taxon>
        <taxon>Gammaproteobacteria</taxon>
        <taxon>Pseudomonadales</taxon>
        <taxon>Pseudomonadaceae</taxon>
        <taxon>Pseudomonas</taxon>
    </lineage>
</organism>
<evidence type="ECO:0000255" key="1">
    <source>
        <dbReference type="HAMAP-Rule" id="MF_01031"/>
    </source>
</evidence>
<feature type="chain" id="PRO_1000135825" description="3-isopropylmalate dehydratase small subunit">
    <location>
        <begin position="1"/>
        <end position="212"/>
    </location>
</feature>